<accession>A4TSJ1</accession>
<comment type="function">
    <text evidence="1">Produces ATP from ADP in the presence of a proton gradient across the membrane. The alpha chain is a regulatory subunit.</text>
</comment>
<comment type="catalytic activity">
    <reaction evidence="1">
        <text>ATP + H2O + 4 H(+)(in) = ADP + phosphate + 5 H(+)(out)</text>
        <dbReference type="Rhea" id="RHEA:57720"/>
        <dbReference type="ChEBI" id="CHEBI:15377"/>
        <dbReference type="ChEBI" id="CHEBI:15378"/>
        <dbReference type="ChEBI" id="CHEBI:30616"/>
        <dbReference type="ChEBI" id="CHEBI:43474"/>
        <dbReference type="ChEBI" id="CHEBI:456216"/>
        <dbReference type="EC" id="7.1.2.2"/>
    </reaction>
</comment>
<comment type="subunit">
    <text evidence="1">F-type ATPases have 2 components, CF(1) - the catalytic core - and CF(0) - the membrane proton channel. CF(1) has five subunits: alpha(3), beta(3), gamma(1), delta(1), epsilon(1). CF(0) has three main subunits: a(1), b(2) and c(9-12). The alpha and beta chains form an alternating ring which encloses part of the gamma chain. CF(1) is attached to CF(0) by a central stalk formed by the gamma and epsilon chains, while a peripheral stalk is formed by the delta and b chains.</text>
</comment>
<comment type="subcellular location">
    <subcellularLocation>
        <location evidence="1">Cell inner membrane</location>
        <topology evidence="1">Peripheral membrane protein</topology>
    </subcellularLocation>
</comment>
<comment type="similarity">
    <text evidence="1">Belongs to the ATPase alpha/beta chains family.</text>
</comment>
<evidence type="ECO:0000255" key="1">
    <source>
        <dbReference type="HAMAP-Rule" id="MF_01346"/>
    </source>
</evidence>
<proteinExistence type="inferred from homology"/>
<sequence length="513" mass="55200">MQLNSTEISELIKQRIAQFNVVSEAHNEGTIVSVSDGIIRVHGLADVMQGEMIALPGNRYAIALNLERDSVGAVVMGPYADLAEGMKVKCTGRILEVPVGRGLLGRVVNTLGEPIDGKGSIENDGFSAVEAIAPGVIERQSVDEPVQTGYKSVDAMIPIGRGQRELIIGDRQTGKTALAIDAIINQRDSGIKCVYVAIGQKASTVANVVRKLEEHDALANTIVVVATASESAALQYLAPYSGCAMGEYFRDRGEDALIIYDDLSKQAVAYRQISLLLRRPPGREAYPGDVFYLHSRLLERAARVNAEYVEAFTKGEVKGKTGSLTALPIIETQAGDVSAFVPTNVISITDGQIFLESSLFNAGIRPAVNPGISVSRVGGAAQTKIMKKLSGGIRTALAQYRELAAFSQFASDLDDATRKQLSHGQKVTELLKQKQYAPMSVAQQSLVLFAAERGYLGDVELAKVGSFEAALLAFADREHAELLQQINQTGAYNDEIEAKLKGILDTFKATQSW</sequence>
<organism>
    <name type="scientific">Yersinia pestis (strain Pestoides F)</name>
    <dbReference type="NCBI Taxonomy" id="386656"/>
    <lineage>
        <taxon>Bacteria</taxon>
        <taxon>Pseudomonadati</taxon>
        <taxon>Pseudomonadota</taxon>
        <taxon>Gammaproteobacteria</taxon>
        <taxon>Enterobacterales</taxon>
        <taxon>Yersiniaceae</taxon>
        <taxon>Yersinia</taxon>
    </lineage>
</organism>
<name>ATPA_YERPP</name>
<gene>
    <name evidence="1" type="primary">atpA</name>
    <name type="ordered locus">YPDSF_3912</name>
</gene>
<dbReference type="EC" id="7.1.2.2" evidence="1"/>
<dbReference type="EMBL" id="CP000668">
    <property type="protein sequence ID" value="ABP42253.1"/>
    <property type="molecule type" value="Genomic_DNA"/>
</dbReference>
<dbReference type="RefSeq" id="WP_002220758.1">
    <property type="nucleotide sequence ID" value="NZ_CP009715.1"/>
</dbReference>
<dbReference type="SMR" id="A4TSJ1"/>
<dbReference type="GeneID" id="96663461"/>
<dbReference type="KEGG" id="ypp:YPDSF_3912"/>
<dbReference type="PATRIC" id="fig|386656.14.peg.605"/>
<dbReference type="GO" id="GO:0005886">
    <property type="term" value="C:plasma membrane"/>
    <property type="evidence" value="ECO:0007669"/>
    <property type="project" value="UniProtKB-SubCell"/>
</dbReference>
<dbReference type="GO" id="GO:0045259">
    <property type="term" value="C:proton-transporting ATP synthase complex"/>
    <property type="evidence" value="ECO:0007669"/>
    <property type="project" value="UniProtKB-KW"/>
</dbReference>
<dbReference type="GO" id="GO:0043531">
    <property type="term" value="F:ADP binding"/>
    <property type="evidence" value="ECO:0007669"/>
    <property type="project" value="TreeGrafter"/>
</dbReference>
<dbReference type="GO" id="GO:0005524">
    <property type="term" value="F:ATP binding"/>
    <property type="evidence" value="ECO:0007669"/>
    <property type="project" value="UniProtKB-UniRule"/>
</dbReference>
<dbReference type="GO" id="GO:0046933">
    <property type="term" value="F:proton-transporting ATP synthase activity, rotational mechanism"/>
    <property type="evidence" value="ECO:0007669"/>
    <property type="project" value="UniProtKB-UniRule"/>
</dbReference>
<dbReference type="CDD" id="cd18113">
    <property type="entry name" value="ATP-synt_F1_alpha_C"/>
    <property type="match status" value="1"/>
</dbReference>
<dbReference type="CDD" id="cd18116">
    <property type="entry name" value="ATP-synt_F1_alpha_N"/>
    <property type="match status" value="1"/>
</dbReference>
<dbReference type="CDD" id="cd01132">
    <property type="entry name" value="F1-ATPase_alpha_CD"/>
    <property type="match status" value="1"/>
</dbReference>
<dbReference type="FunFam" id="1.20.150.20:FF:000001">
    <property type="entry name" value="ATP synthase subunit alpha"/>
    <property type="match status" value="1"/>
</dbReference>
<dbReference type="FunFam" id="2.40.30.20:FF:000001">
    <property type="entry name" value="ATP synthase subunit alpha"/>
    <property type="match status" value="1"/>
</dbReference>
<dbReference type="FunFam" id="3.40.50.300:FF:000002">
    <property type="entry name" value="ATP synthase subunit alpha"/>
    <property type="match status" value="1"/>
</dbReference>
<dbReference type="Gene3D" id="2.40.30.20">
    <property type="match status" value="1"/>
</dbReference>
<dbReference type="Gene3D" id="1.20.150.20">
    <property type="entry name" value="ATP synthase alpha/beta chain, C-terminal domain"/>
    <property type="match status" value="1"/>
</dbReference>
<dbReference type="Gene3D" id="3.40.50.300">
    <property type="entry name" value="P-loop containing nucleotide triphosphate hydrolases"/>
    <property type="match status" value="1"/>
</dbReference>
<dbReference type="HAMAP" id="MF_01346">
    <property type="entry name" value="ATP_synth_alpha_bact"/>
    <property type="match status" value="1"/>
</dbReference>
<dbReference type="InterPro" id="IPR023366">
    <property type="entry name" value="ATP_synth_asu-like_sf"/>
</dbReference>
<dbReference type="InterPro" id="IPR000793">
    <property type="entry name" value="ATP_synth_asu_C"/>
</dbReference>
<dbReference type="InterPro" id="IPR038376">
    <property type="entry name" value="ATP_synth_asu_C_sf"/>
</dbReference>
<dbReference type="InterPro" id="IPR033732">
    <property type="entry name" value="ATP_synth_F1_a_nt-bd_dom"/>
</dbReference>
<dbReference type="InterPro" id="IPR005294">
    <property type="entry name" value="ATP_synth_F1_asu"/>
</dbReference>
<dbReference type="InterPro" id="IPR020003">
    <property type="entry name" value="ATPase_a/bsu_AS"/>
</dbReference>
<dbReference type="InterPro" id="IPR004100">
    <property type="entry name" value="ATPase_F1/V1/A1_a/bsu_N"/>
</dbReference>
<dbReference type="InterPro" id="IPR036121">
    <property type="entry name" value="ATPase_F1/V1/A1_a/bsu_N_sf"/>
</dbReference>
<dbReference type="InterPro" id="IPR000194">
    <property type="entry name" value="ATPase_F1/V1/A1_a/bsu_nucl-bd"/>
</dbReference>
<dbReference type="InterPro" id="IPR027417">
    <property type="entry name" value="P-loop_NTPase"/>
</dbReference>
<dbReference type="NCBIfam" id="TIGR00962">
    <property type="entry name" value="atpA"/>
    <property type="match status" value="1"/>
</dbReference>
<dbReference type="NCBIfam" id="NF009884">
    <property type="entry name" value="PRK13343.1"/>
    <property type="match status" value="1"/>
</dbReference>
<dbReference type="PANTHER" id="PTHR48082">
    <property type="entry name" value="ATP SYNTHASE SUBUNIT ALPHA, MITOCHONDRIAL"/>
    <property type="match status" value="1"/>
</dbReference>
<dbReference type="PANTHER" id="PTHR48082:SF2">
    <property type="entry name" value="ATP SYNTHASE SUBUNIT ALPHA, MITOCHONDRIAL"/>
    <property type="match status" value="1"/>
</dbReference>
<dbReference type="Pfam" id="PF00006">
    <property type="entry name" value="ATP-synt_ab"/>
    <property type="match status" value="1"/>
</dbReference>
<dbReference type="Pfam" id="PF00306">
    <property type="entry name" value="ATP-synt_ab_C"/>
    <property type="match status" value="1"/>
</dbReference>
<dbReference type="Pfam" id="PF02874">
    <property type="entry name" value="ATP-synt_ab_N"/>
    <property type="match status" value="1"/>
</dbReference>
<dbReference type="SUPFAM" id="SSF47917">
    <property type="entry name" value="C-terminal domain of alpha and beta subunits of F1 ATP synthase"/>
    <property type="match status" value="1"/>
</dbReference>
<dbReference type="SUPFAM" id="SSF50615">
    <property type="entry name" value="N-terminal domain of alpha and beta subunits of F1 ATP synthase"/>
    <property type="match status" value="1"/>
</dbReference>
<dbReference type="SUPFAM" id="SSF52540">
    <property type="entry name" value="P-loop containing nucleoside triphosphate hydrolases"/>
    <property type="match status" value="1"/>
</dbReference>
<dbReference type="PROSITE" id="PS00152">
    <property type="entry name" value="ATPASE_ALPHA_BETA"/>
    <property type="match status" value="1"/>
</dbReference>
<protein>
    <recommendedName>
        <fullName evidence="1">ATP synthase subunit alpha</fullName>
        <ecNumber evidence="1">7.1.2.2</ecNumber>
    </recommendedName>
    <alternativeName>
        <fullName evidence="1">ATP synthase F1 sector subunit alpha</fullName>
    </alternativeName>
    <alternativeName>
        <fullName evidence="1">F-ATPase subunit alpha</fullName>
    </alternativeName>
</protein>
<keyword id="KW-0066">ATP synthesis</keyword>
<keyword id="KW-0067">ATP-binding</keyword>
<keyword id="KW-0997">Cell inner membrane</keyword>
<keyword id="KW-1003">Cell membrane</keyword>
<keyword id="KW-0139">CF(1)</keyword>
<keyword id="KW-0375">Hydrogen ion transport</keyword>
<keyword id="KW-0406">Ion transport</keyword>
<keyword id="KW-0472">Membrane</keyword>
<keyword id="KW-0547">Nucleotide-binding</keyword>
<keyword id="KW-1278">Translocase</keyword>
<keyword id="KW-0813">Transport</keyword>
<feature type="chain" id="PRO_0000302717" description="ATP synthase subunit alpha">
    <location>
        <begin position="1"/>
        <end position="513"/>
    </location>
</feature>
<feature type="binding site" evidence="1">
    <location>
        <begin position="169"/>
        <end position="176"/>
    </location>
    <ligand>
        <name>ATP</name>
        <dbReference type="ChEBI" id="CHEBI:30616"/>
    </ligand>
</feature>
<feature type="site" description="Required for activity" evidence="1">
    <location>
        <position position="373"/>
    </location>
</feature>
<reference key="1">
    <citation type="submission" date="2007-02" db="EMBL/GenBank/DDBJ databases">
        <title>Complete sequence of chromosome of Yersinia pestis Pestoides F.</title>
        <authorList>
            <consortium name="US DOE Joint Genome Institute"/>
            <person name="Copeland A."/>
            <person name="Lucas S."/>
            <person name="Lapidus A."/>
            <person name="Barry K."/>
            <person name="Detter J.C."/>
            <person name="Glavina del Rio T."/>
            <person name="Hammon N."/>
            <person name="Israni S."/>
            <person name="Dalin E."/>
            <person name="Tice H."/>
            <person name="Pitluck S."/>
            <person name="Di Bartolo G."/>
            <person name="Chain P."/>
            <person name="Malfatti S."/>
            <person name="Shin M."/>
            <person name="Vergez L."/>
            <person name="Schmutz J."/>
            <person name="Larimer F."/>
            <person name="Land M."/>
            <person name="Hauser L."/>
            <person name="Worsham P."/>
            <person name="Chu M."/>
            <person name="Bearden S."/>
            <person name="Garcia E."/>
            <person name="Richardson P."/>
        </authorList>
    </citation>
    <scope>NUCLEOTIDE SEQUENCE [LARGE SCALE GENOMIC DNA]</scope>
    <source>
        <strain>Pestoides F</strain>
    </source>
</reference>